<reference key="1">
    <citation type="journal article" date="1996" name="Science">
        <title>Complete genome sequence of the methanogenic archaeon, Methanococcus jannaschii.</title>
        <authorList>
            <person name="Bult C.J."/>
            <person name="White O."/>
            <person name="Olsen G.J."/>
            <person name="Zhou L."/>
            <person name="Fleischmann R.D."/>
            <person name="Sutton G.G."/>
            <person name="Blake J.A."/>
            <person name="FitzGerald L.M."/>
            <person name="Clayton R.A."/>
            <person name="Gocayne J.D."/>
            <person name="Kerlavage A.R."/>
            <person name="Dougherty B.A."/>
            <person name="Tomb J.-F."/>
            <person name="Adams M.D."/>
            <person name="Reich C.I."/>
            <person name="Overbeek R."/>
            <person name="Kirkness E.F."/>
            <person name="Weinstock K.G."/>
            <person name="Merrick J.M."/>
            <person name="Glodek A."/>
            <person name="Scott J.L."/>
            <person name="Geoghagen N.S.M."/>
            <person name="Weidman J.F."/>
            <person name="Fuhrmann J.L."/>
            <person name="Nguyen D."/>
            <person name="Utterback T.R."/>
            <person name="Kelley J.M."/>
            <person name="Peterson J.D."/>
            <person name="Sadow P.W."/>
            <person name="Hanna M.C."/>
            <person name="Cotton M.D."/>
            <person name="Roberts K.M."/>
            <person name="Hurst M.A."/>
            <person name="Kaine B.P."/>
            <person name="Borodovsky M."/>
            <person name="Klenk H.-P."/>
            <person name="Fraser C.M."/>
            <person name="Smith H.O."/>
            <person name="Woese C.R."/>
            <person name="Venter J.C."/>
        </authorList>
    </citation>
    <scope>NUCLEOTIDE SEQUENCE [LARGE SCALE GENOMIC DNA]</scope>
    <source>
        <strain>ATCC 43067 / DSM 2661 / JAL-1 / JCM 10045 / NBRC 100440</strain>
    </source>
</reference>
<accession>Q57791</accession>
<proteinExistence type="predicted"/>
<protein>
    <recommendedName>
        <fullName>Uncharacterized protein MJ0345</fullName>
    </recommendedName>
</protein>
<organism>
    <name type="scientific">Methanocaldococcus jannaschii (strain ATCC 43067 / DSM 2661 / JAL-1 / JCM 10045 / NBRC 100440)</name>
    <name type="common">Methanococcus jannaschii</name>
    <dbReference type="NCBI Taxonomy" id="243232"/>
    <lineage>
        <taxon>Archaea</taxon>
        <taxon>Methanobacteriati</taxon>
        <taxon>Methanobacteriota</taxon>
        <taxon>Methanomada group</taxon>
        <taxon>Methanococci</taxon>
        <taxon>Methanococcales</taxon>
        <taxon>Methanocaldococcaceae</taxon>
        <taxon>Methanocaldococcus</taxon>
    </lineage>
</organism>
<evidence type="ECO:0000256" key="1">
    <source>
        <dbReference type="SAM" id="MobiDB-lite"/>
    </source>
</evidence>
<name>Y345_METJA</name>
<sequence length="317" mass="35379">MDCVTNATTRCRKGSIVVIVMPPLISNNTFFLMNTTNDGNGGSVSYDYPLLSNQNSLITNTTNNLTSDSTNTDISNETPILSNNTPILMNTPTNPNSDSDTTTPTVVSHTVELITEEKKVISKIVYSDGTEDVKELDLTDFYNSAYNEGYSAGVNSVDFSKTGYIIENGIIKVTTTLTNGKSQEYNITLDENLVVSLYNQIMANKSSCFQIRQNETEYSFLVESRQYQPQPNLAYQPAVDGTPVYEVLGQEQKTWSFTLYVDSIPKMQFLQQLASNPLIEVYFDEIGDWKQALIQSISLSRITTGHYYADIELIILE</sequence>
<keyword id="KW-1185">Reference proteome</keyword>
<dbReference type="EMBL" id="L77117">
    <property type="protein sequence ID" value="AAB98335.1"/>
    <property type="molecule type" value="Genomic_DNA"/>
</dbReference>
<dbReference type="PIR" id="A64343">
    <property type="entry name" value="A64343"/>
</dbReference>
<dbReference type="STRING" id="243232.MJ_0345"/>
<dbReference type="PaxDb" id="243232-MJ_0345"/>
<dbReference type="EnsemblBacteria" id="AAB98335">
    <property type="protein sequence ID" value="AAB98335"/>
    <property type="gene ID" value="MJ_0345"/>
</dbReference>
<dbReference type="KEGG" id="mja:MJ_0345"/>
<dbReference type="eggNOG" id="arCOG09649">
    <property type="taxonomic scope" value="Archaea"/>
</dbReference>
<dbReference type="HOGENOM" id="CLU_876063_0_0_2"/>
<dbReference type="InParanoid" id="Q57791"/>
<dbReference type="OrthoDB" id="386091at2157"/>
<dbReference type="Proteomes" id="UP000000805">
    <property type="component" value="Chromosome"/>
</dbReference>
<feature type="chain" id="PRO_0000106815" description="Uncharacterized protein MJ0345">
    <location>
        <begin position="1"/>
        <end position="317"/>
    </location>
</feature>
<feature type="region of interest" description="Disordered" evidence="1">
    <location>
        <begin position="68"/>
        <end position="87"/>
    </location>
</feature>
<feature type="compositionally biased region" description="Low complexity" evidence="1">
    <location>
        <begin position="68"/>
        <end position="78"/>
    </location>
</feature>
<gene>
    <name type="ordered locus">MJ0345</name>
</gene>